<dbReference type="EC" id="2.4.1.21" evidence="1"/>
<dbReference type="EMBL" id="AE007317">
    <property type="protein sequence ID" value="AAK99836.1"/>
    <property type="molecule type" value="Genomic_DNA"/>
</dbReference>
<dbReference type="PIR" id="H98000">
    <property type="entry name" value="H98000"/>
</dbReference>
<dbReference type="RefSeq" id="NP_358626.1">
    <property type="nucleotide sequence ID" value="NC_003098.1"/>
</dbReference>
<dbReference type="RefSeq" id="WP_000697293.1">
    <property type="nucleotide sequence ID" value="NC_003098.1"/>
</dbReference>
<dbReference type="SMR" id="Q8DPS3"/>
<dbReference type="STRING" id="171101.spr1032"/>
<dbReference type="CAZy" id="GT5">
    <property type="family name" value="Glycosyltransferase Family 5"/>
</dbReference>
<dbReference type="KEGG" id="spr:spr1032"/>
<dbReference type="PATRIC" id="fig|171101.6.peg.1120"/>
<dbReference type="eggNOG" id="COG0297">
    <property type="taxonomic scope" value="Bacteria"/>
</dbReference>
<dbReference type="HOGENOM" id="CLU_009583_18_2_9"/>
<dbReference type="UniPathway" id="UPA00164"/>
<dbReference type="Proteomes" id="UP000000586">
    <property type="component" value="Chromosome"/>
</dbReference>
<dbReference type="GO" id="GO:0009011">
    <property type="term" value="F:alpha-1,4-glucan glucosyltransferase (ADP-glucose donor) activity"/>
    <property type="evidence" value="ECO:0007669"/>
    <property type="project" value="UniProtKB-UniRule"/>
</dbReference>
<dbReference type="GO" id="GO:0004373">
    <property type="term" value="F:alpha-1,4-glucan glucosyltransferase (UDP-glucose donor) activity"/>
    <property type="evidence" value="ECO:0007669"/>
    <property type="project" value="InterPro"/>
</dbReference>
<dbReference type="GO" id="GO:0005978">
    <property type="term" value="P:glycogen biosynthetic process"/>
    <property type="evidence" value="ECO:0007669"/>
    <property type="project" value="UniProtKB-UniRule"/>
</dbReference>
<dbReference type="CDD" id="cd03791">
    <property type="entry name" value="GT5_Glycogen_synthase_DULL1-like"/>
    <property type="match status" value="1"/>
</dbReference>
<dbReference type="Gene3D" id="3.40.50.2000">
    <property type="entry name" value="Glycogen Phosphorylase B"/>
    <property type="match status" value="2"/>
</dbReference>
<dbReference type="HAMAP" id="MF_00484">
    <property type="entry name" value="Glycogen_synth"/>
    <property type="match status" value="1"/>
</dbReference>
<dbReference type="InterPro" id="IPR001296">
    <property type="entry name" value="Glyco_trans_1"/>
</dbReference>
<dbReference type="InterPro" id="IPR011835">
    <property type="entry name" value="GS/SS"/>
</dbReference>
<dbReference type="InterPro" id="IPR013534">
    <property type="entry name" value="Starch_synth_cat_dom"/>
</dbReference>
<dbReference type="NCBIfam" id="TIGR02095">
    <property type="entry name" value="glgA"/>
    <property type="match status" value="1"/>
</dbReference>
<dbReference type="NCBIfam" id="NF001898">
    <property type="entry name" value="PRK00654.1-1"/>
    <property type="match status" value="1"/>
</dbReference>
<dbReference type="PANTHER" id="PTHR45825:SF11">
    <property type="entry name" value="ALPHA AMYLASE DOMAIN-CONTAINING PROTEIN"/>
    <property type="match status" value="1"/>
</dbReference>
<dbReference type="PANTHER" id="PTHR45825">
    <property type="entry name" value="GRANULE-BOUND STARCH SYNTHASE 1, CHLOROPLASTIC/AMYLOPLASTIC"/>
    <property type="match status" value="1"/>
</dbReference>
<dbReference type="Pfam" id="PF08323">
    <property type="entry name" value="Glyco_transf_5"/>
    <property type="match status" value="1"/>
</dbReference>
<dbReference type="Pfam" id="PF00534">
    <property type="entry name" value="Glycos_transf_1"/>
    <property type="match status" value="1"/>
</dbReference>
<dbReference type="SUPFAM" id="SSF53756">
    <property type="entry name" value="UDP-Glycosyltransferase/glycogen phosphorylase"/>
    <property type="match status" value="1"/>
</dbReference>
<proteinExistence type="inferred from homology"/>
<feature type="chain" id="PRO_0000188650" description="Glycogen synthase">
    <location>
        <begin position="1"/>
        <end position="477"/>
    </location>
</feature>
<feature type="binding site" evidence="1">
    <location>
        <position position="15"/>
    </location>
    <ligand>
        <name>ADP-alpha-D-glucose</name>
        <dbReference type="ChEBI" id="CHEBI:57498"/>
    </ligand>
</feature>
<accession>Q8DPS3</accession>
<sequence length="477" mass="54168">MKILFVAAEGAPFSKTGGLGDVIGALPKSLVKAGHEVAVILPYYDMVEAKFGNQIEDVLHFEVSVGWRRQYCGIKKTVLNGVTFYFIDNQYYFFRGHVYGDFDDGERFAFFQLAAIEAMERIDFIPDLLHVHDYHTAMIPFLLKEKYRWIQAYEDIETVLTIHNLEFQGQFSEGMLGDLFGVGFERYADGTLRWNNCLNWMKAGILYANRVSTVSPSYAHEIMTSQFGCNLDHILKMESGKVSGIVNGIDADLYNPQTDALLDYHFNQEDLSGKAKNKAKLQERVGLPVRADVPLVGIVSRLTRQKGFDVVVESLHHILQEDVQIVLLGTGDPAFEGAFSWFAQIYPDKLSTNITFDVKLAQEIYAACDLFLMPSRFEPCGLSQMMAMRYGTLPLVHEVGGLRDTVRAFNPIEGSGTGFSFDNLSPYWLNWTFQTALDLYRNHPDIWRNLQKQAMESDFSWDTACKSYLDLYHSLVN</sequence>
<evidence type="ECO:0000255" key="1">
    <source>
        <dbReference type="HAMAP-Rule" id="MF_00484"/>
    </source>
</evidence>
<keyword id="KW-0320">Glycogen biosynthesis</keyword>
<keyword id="KW-0328">Glycosyltransferase</keyword>
<keyword id="KW-1185">Reference proteome</keyword>
<keyword id="KW-0808">Transferase</keyword>
<gene>
    <name evidence="1" type="primary">glgA</name>
    <name type="ordered locus">spr1032</name>
</gene>
<protein>
    <recommendedName>
        <fullName evidence="1">Glycogen synthase</fullName>
        <ecNumber evidence="1">2.4.1.21</ecNumber>
    </recommendedName>
    <alternativeName>
        <fullName evidence="1">Starch [bacterial glycogen] synthase</fullName>
    </alternativeName>
</protein>
<organism>
    <name type="scientific">Streptococcus pneumoniae (strain ATCC BAA-255 / R6)</name>
    <dbReference type="NCBI Taxonomy" id="171101"/>
    <lineage>
        <taxon>Bacteria</taxon>
        <taxon>Bacillati</taxon>
        <taxon>Bacillota</taxon>
        <taxon>Bacilli</taxon>
        <taxon>Lactobacillales</taxon>
        <taxon>Streptococcaceae</taxon>
        <taxon>Streptococcus</taxon>
    </lineage>
</organism>
<name>GLGA_STRR6</name>
<comment type="function">
    <text evidence="1">Synthesizes alpha-1,4-glucan chains using ADP-glucose.</text>
</comment>
<comment type="catalytic activity">
    <reaction evidence="1">
        <text>[(1-&gt;4)-alpha-D-glucosyl](n) + ADP-alpha-D-glucose = [(1-&gt;4)-alpha-D-glucosyl](n+1) + ADP + H(+)</text>
        <dbReference type="Rhea" id="RHEA:18189"/>
        <dbReference type="Rhea" id="RHEA-COMP:9584"/>
        <dbReference type="Rhea" id="RHEA-COMP:9587"/>
        <dbReference type="ChEBI" id="CHEBI:15378"/>
        <dbReference type="ChEBI" id="CHEBI:15444"/>
        <dbReference type="ChEBI" id="CHEBI:57498"/>
        <dbReference type="ChEBI" id="CHEBI:456216"/>
        <dbReference type="EC" id="2.4.1.21"/>
    </reaction>
</comment>
<comment type="pathway">
    <text evidence="1">Glycan biosynthesis; glycogen biosynthesis.</text>
</comment>
<comment type="similarity">
    <text evidence="1">Belongs to the glycosyltransferase 1 family. Bacterial/plant glycogen synthase subfamily.</text>
</comment>
<reference key="1">
    <citation type="journal article" date="2001" name="J. Bacteriol.">
        <title>Genome of the bacterium Streptococcus pneumoniae strain R6.</title>
        <authorList>
            <person name="Hoskins J."/>
            <person name="Alborn W.E. Jr."/>
            <person name="Arnold J."/>
            <person name="Blaszczak L.C."/>
            <person name="Burgett S."/>
            <person name="DeHoff B.S."/>
            <person name="Estrem S.T."/>
            <person name="Fritz L."/>
            <person name="Fu D.-J."/>
            <person name="Fuller W."/>
            <person name="Geringer C."/>
            <person name="Gilmour R."/>
            <person name="Glass J.S."/>
            <person name="Khoja H."/>
            <person name="Kraft A.R."/>
            <person name="Lagace R.E."/>
            <person name="LeBlanc D.J."/>
            <person name="Lee L.N."/>
            <person name="Lefkowitz E.J."/>
            <person name="Lu J."/>
            <person name="Matsushima P."/>
            <person name="McAhren S.M."/>
            <person name="McHenney M."/>
            <person name="McLeaster K."/>
            <person name="Mundy C.W."/>
            <person name="Nicas T.I."/>
            <person name="Norris F.H."/>
            <person name="O'Gara M."/>
            <person name="Peery R.B."/>
            <person name="Robertson G.T."/>
            <person name="Rockey P."/>
            <person name="Sun P.-M."/>
            <person name="Winkler M.E."/>
            <person name="Yang Y."/>
            <person name="Young-Bellido M."/>
            <person name="Zhao G."/>
            <person name="Zook C.A."/>
            <person name="Baltz R.H."/>
            <person name="Jaskunas S.R."/>
            <person name="Rosteck P.R. Jr."/>
            <person name="Skatrud P.L."/>
            <person name="Glass J.I."/>
        </authorList>
    </citation>
    <scope>NUCLEOTIDE SEQUENCE [LARGE SCALE GENOMIC DNA]</scope>
    <source>
        <strain>ATCC BAA-255 / R6</strain>
    </source>
</reference>